<protein>
    <recommendedName>
        <fullName>Transcriptional regulatory protein DltR</fullName>
    </recommendedName>
</protein>
<comment type="function">
    <text>Member of the two-component regulatory system DltS/DltR. Regulates the expression of the dlt operon.</text>
</comment>
<comment type="subcellular location">
    <subcellularLocation>
        <location evidence="3">Cytoplasm</location>
    </subcellularLocation>
</comment>
<comment type="PTM">
    <text evidence="3">Phosphorylated by DltS.</text>
</comment>
<evidence type="ECO:0000255" key="1">
    <source>
        <dbReference type="PROSITE-ProRule" id="PRU00169"/>
    </source>
</evidence>
<evidence type="ECO:0000255" key="2">
    <source>
        <dbReference type="PROSITE-ProRule" id="PRU01091"/>
    </source>
</evidence>
<evidence type="ECO:0000305" key="3"/>
<reference key="1">
    <citation type="journal article" date="2002" name="Proc. Natl. Acad. Sci. U.S.A.">
        <title>Complete genome sequence and comparative genomic analysis of an emerging human pathogen, serotype V Streptococcus agalactiae.</title>
        <authorList>
            <person name="Tettelin H."/>
            <person name="Masignani V."/>
            <person name="Cieslewicz M.J."/>
            <person name="Eisen J.A."/>
            <person name="Peterson S.N."/>
            <person name="Wessels M.R."/>
            <person name="Paulsen I.T."/>
            <person name="Nelson K.E."/>
            <person name="Margarit I."/>
            <person name="Read T.D."/>
            <person name="Madoff L.C."/>
            <person name="Wolf A.M."/>
            <person name="Beanan M.J."/>
            <person name="Brinkac L.M."/>
            <person name="Daugherty S.C."/>
            <person name="DeBoy R.T."/>
            <person name="Durkin A.S."/>
            <person name="Kolonay J.F."/>
            <person name="Madupu R."/>
            <person name="Lewis M.R."/>
            <person name="Radune D."/>
            <person name="Fedorova N.B."/>
            <person name="Scanlan D."/>
            <person name="Khouri H.M."/>
            <person name="Mulligan S."/>
            <person name="Carty H.A."/>
            <person name="Cline R.T."/>
            <person name="Van Aken S.E."/>
            <person name="Gill J."/>
            <person name="Scarselli M."/>
            <person name="Mora M."/>
            <person name="Iacobini E.T."/>
            <person name="Brettoni C."/>
            <person name="Galli G."/>
            <person name="Mariani M."/>
            <person name="Vegni F."/>
            <person name="Maione D."/>
            <person name="Rinaudo D."/>
            <person name="Rappuoli R."/>
            <person name="Telford J.L."/>
            <person name="Kasper D.L."/>
            <person name="Grandi G."/>
            <person name="Fraser C.M."/>
        </authorList>
    </citation>
    <scope>NUCLEOTIDE SEQUENCE [LARGE SCALE GENOMIC DNA]</scope>
    <source>
        <strain>ATCC BAA-611 / 2603 V/R</strain>
    </source>
</reference>
<organism>
    <name type="scientific">Streptococcus agalactiae serotype V (strain ATCC BAA-611 / 2603 V/R)</name>
    <dbReference type="NCBI Taxonomy" id="208435"/>
    <lineage>
        <taxon>Bacteria</taxon>
        <taxon>Bacillati</taxon>
        <taxon>Bacillota</taxon>
        <taxon>Bacilli</taxon>
        <taxon>Lactobacillales</taxon>
        <taxon>Streptococcaceae</taxon>
        <taxon>Streptococcus</taxon>
    </lineage>
</organism>
<sequence>MRLLVVEDEKSIAEAIQALLADKGYSVDLAFDGDDGLEYILTGLYDLVLLDIMLPKRSGLSVLKRVREAGLETPIIFLTAKSQTYDKVNGLDLGADDYITKPFEADELLARIRLRTRQSSLIRANQLRLGNIRLNTDSHELESKESSVKLSNKEFLLMEVFMRNAKQIIPKNQLISKVWGPSDNSEYNQLEVFISFLRKKLRFLKADIEIITTKGFGYSLEERT</sequence>
<keyword id="KW-0963">Cytoplasm</keyword>
<keyword id="KW-0238">DNA-binding</keyword>
<keyword id="KW-0597">Phosphoprotein</keyword>
<keyword id="KW-1185">Reference proteome</keyword>
<keyword id="KW-0804">Transcription</keyword>
<keyword id="KW-0805">Transcription regulation</keyword>
<keyword id="KW-0902">Two-component regulatory system</keyword>
<gene>
    <name type="primary">dltR</name>
    <name type="ordered locus">SAG1792</name>
</gene>
<proteinExistence type="inferred from homology"/>
<accession>P0A4I0</accession>
<accession>Q8DXQ7</accession>
<accession>Q8E3C6</accession>
<accession>Q8VM69</accession>
<feature type="chain" id="PRO_0000081067" description="Transcriptional regulatory protein DltR">
    <location>
        <begin position="1"/>
        <end position="224"/>
    </location>
</feature>
<feature type="domain" description="Response regulatory" evidence="1">
    <location>
        <begin position="2"/>
        <end position="116"/>
    </location>
</feature>
<feature type="DNA-binding region" description="OmpR/PhoB-type" evidence="2">
    <location>
        <begin position="124"/>
        <end position="222"/>
    </location>
</feature>
<feature type="modified residue" description="4-aspartylphosphate" evidence="1">
    <location>
        <position position="51"/>
    </location>
</feature>
<name>DLTR_STRA5</name>
<dbReference type="EMBL" id="AE009948">
    <property type="protein sequence ID" value="AAN00655.1"/>
    <property type="molecule type" value="Genomic_DNA"/>
</dbReference>
<dbReference type="RefSeq" id="NP_688782.1">
    <property type="nucleotide sequence ID" value="NC_004116.1"/>
</dbReference>
<dbReference type="RefSeq" id="WP_001238594.1">
    <property type="nucleotide sequence ID" value="NC_004116.1"/>
</dbReference>
<dbReference type="SMR" id="P0A4I0"/>
<dbReference type="STRING" id="208435.SAG1792"/>
<dbReference type="GeneID" id="66886631"/>
<dbReference type="KEGG" id="sag:SAG1792"/>
<dbReference type="PATRIC" id="fig|208435.3.peg.1800"/>
<dbReference type="HOGENOM" id="CLU_000445_30_1_9"/>
<dbReference type="OrthoDB" id="9790442at2"/>
<dbReference type="Proteomes" id="UP000000821">
    <property type="component" value="Chromosome"/>
</dbReference>
<dbReference type="GO" id="GO:0005829">
    <property type="term" value="C:cytosol"/>
    <property type="evidence" value="ECO:0007669"/>
    <property type="project" value="TreeGrafter"/>
</dbReference>
<dbReference type="GO" id="GO:0032993">
    <property type="term" value="C:protein-DNA complex"/>
    <property type="evidence" value="ECO:0007669"/>
    <property type="project" value="TreeGrafter"/>
</dbReference>
<dbReference type="GO" id="GO:0000156">
    <property type="term" value="F:phosphorelay response regulator activity"/>
    <property type="evidence" value="ECO:0007669"/>
    <property type="project" value="TreeGrafter"/>
</dbReference>
<dbReference type="GO" id="GO:0000976">
    <property type="term" value="F:transcription cis-regulatory region binding"/>
    <property type="evidence" value="ECO:0007669"/>
    <property type="project" value="TreeGrafter"/>
</dbReference>
<dbReference type="GO" id="GO:0006355">
    <property type="term" value="P:regulation of DNA-templated transcription"/>
    <property type="evidence" value="ECO:0007669"/>
    <property type="project" value="InterPro"/>
</dbReference>
<dbReference type="CDD" id="cd17625">
    <property type="entry name" value="REC_OmpR_DrrD-like"/>
    <property type="match status" value="1"/>
</dbReference>
<dbReference type="CDD" id="cd00383">
    <property type="entry name" value="trans_reg_C"/>
    <property type="match status" value="1"/>
</dbReference>
<dbReference type="FunFam" id="3.40.50.2300:FF:000001">
    <property type="entry name" value="DNA-binding response regulator PhoB"/>
    <property type="match status" value="1"/>
</dbReference>
<dbReference type="Gene3D" id="3.40.50.2300">
    <property type="match status" value="1"/>
</dbReference>
<dbReference type="Gene3D" id="6.10.250.690">
    <property type="match status" value="1"/>
</dbReference>
<dbReference type="Gene3D" id="1.10.10.10">
    <property type="entry name" value="Winged helix-like DNA-binding domain superfamily/Winged helix DNA-binding domain"/>
    <property type="match status" value="1"/>
</dbReference>
<dbReference type="InterPro" id="IPR011006">
    <property type="entry name" value="CheY-like_superfamily"/>
</dbReference>
<dbReference type="InterPro" id="IPR001867">
    <property type="entry name" value="OmpR/PhoB-type_DNA-bd"/>
</dbReference>
<dbReference type="InterPro" id="IPR001789">
    <property type="entry name" value="Sig_transdc_resp-reg_receiver"/>
</dbReference>
<dbReference type="InterPro" id="IPR039420">
    <property type="entry name" value="WalR-like"/>
</dbReference>
<dbReference type="InterPro" id="IPR036388">
    <property type="entry name" value="WH-like_DNA-bd_sf"/>
</dbReference>
<dbReference type="PANTHER" id="PTHR48111">
    <property type="entry name" value="REGULATOR OF RPOS"/>
    <property type="match status" value="1"/>
</dbReference>
<dbReference type="PANTHER" id="PTHR48111:SF22">
    <property type="entry name" value="REGULATOR OF RPOS"/>
    <property type="match status" value="1"/>
</dbReference>
<dbReference type="Pfam" id="PF00072">
    <property type="entry name" value="Response_reg"/>
    <property type="match status" value="1"/>
</dbReference>
<dbReference type="Pfam" id="PF00486">
    <property type="entry name" value="Trans_reg_C"/>
    <property type="match status" value="1"/>
</dbReference>
<dbReference type="SMART" id="SM00448">
    <property type="entry name" value="REC"/>
    <property type="match status" value="1"/>
</dbReference>
<dbReference type="SMART" id="SM00862">
    <property type="entry name" value="Trans_reg_C"/>
    <property type="match status" value="1"/>
</dbReference>
<dbReference type="SUPFAM" id="SSF52172">
    <property type="entry name" value="CheY-like"/>
    <property type="match status" value="1"/>
</dbReference>
<dbReference type="PROSITE" id="PS51755">
    <property type="entry name" value="OMPR_PHOB"/>
    <property type="match status" value="1"/>
</dbReference>
<dbReference type="PROSITE" id="PS50110">
    <property type="entry name" value="RESPONSE_REGULATORY"/>
    <property type="match status" value="1"/>
</dbReference>